<feature type="initiator methionine" description="Removed" evidence="1">
    <location>
        <position position="1"/>
    </location>
</feature>
<feature type="chain" id="PRO_0000198263" description="Calmodulin">
    <location>
        <begin position="2"/>
        <end position="149"/>
    </location>
</feature>
<feature type="domain" description="EF-hand 1" evidence="2">
    <location>
        <begin position="8"/>
        <end position="43"/>
    </location>
</feature>
<feature type="domain" description="EF-hand 2" evidence="2">
    <location>
        <begin position="44"/>
        <end position="79"/>
    </location>
</feature>
<feature type="domain" description="EF-hand 3" evidence="2">
    <location>
        <begin position="81"/>
        <end position="116"/>
    </location>
</feature>
<feature type="domain" description="EF-hand 4" evidence="2">
    <location>
        <begin position="117"/>
        <end position="149"/>
    </location>
</feature>
<feature type="binding site" evidence="2">
    <location>
        <position position="21"/>
    </location>
    <ligand>
        <name>Ca(2+)</name>
        <dbReference type="ChEBI" id="CHEBI:29108"/>
        <label>1</label>
    </ligand>
</feature>
<feature type="binding site" evidence="2">
    <location>
        <position position="23"/>
    </location>
    <ligand>
        <name>Ca(2+)</name>
        <dbReference type="ChEBI" id="CHEBI:29108"/>
        <label>1</label>
    </ligand>
</feature>
<feature type="binding site" evidence="2">
    <location>
        <position position="25"/>
    </location>
    <ligand>
        <name>Ca(2+)</name>
        <dbReference type="ChEBI" id="CHEBI:29108"/>
        <label>1</label>
    </ligand>
</feature>
<feature type="binding site" evidence="2">
    <location>
        <position position="27"/>
    </location>
    <ligand>
        <name>Ca(2+)</name>
        <dbReference type="ChEBI" id="CHEBI:29108"/>
        <label>1</label>
    </ligand>
</feature>
<feature type="binding site" evidence="2">
    <location>
        <position position="32"/>
    </location>
    <ligand>
        <name>Ca(2+)</name>
        <dbReference type="ChEBI" id="CHEBI:29108"/>
        <label>1</label>
    </ligand>
</feature>
<feature type="binding site" evidence="2">
    <location>
        <position position="57"/>
    </location>
    <ligand>
        <name>Ca(2+)</name>
        <dbReference type="ChEBI" id="CHEBI:29108"/>
        <label>2</label>
    </ligand>
</feature>
<feature type="binding site" evidence="2">
    <location>
        <position position="59"/>
    </location>
    <ligand>
        <name>Ca(2+)</name>
        <dbReference type="ChEBI" id="CHEBI:29108"/>
        <label>2</label>
    </ligand>
</feature>
<feature type="binding site" evidence="2">
    <location>
        <position position="61"/>
    </location>
    <ligand>
        <name>Ca(2+)</name>
        <dbReference type="ChEBI" id="CHEBI:29108"/>
        <label>2</label>
    </ligand>
</feature>
<feature type="binding site" evidence="2">
    <location>
        <position position="63"/>
    </location>
    <ligand>
        <name>Ca(2+)</name>
        <dbReference type="ChEBI" id="CHEBI:29108"/>
        <label>2</label>
    </ligand>
</feature>
<feature type="binding site" evidence="2">
    <location>
        <position position="68"/>
    </location>
    <ligand>
        <name>Ca(2+)</name>
        <dbReference type="ChEBI" id="CHEBI:29108"/>
        <label>2</label>
    </ligand>
</feature>
<feature type="binding site" evidence="2">
    <location>
        <position position="94"/>
    </location>
    <ligand>
        <name>Ca(2+)</name>
        <dbReference type="ChEBI" id="CHEBI:29108"/>
        <label>3</label>
    </ligand>
</feature>
<feature type="binding site" evidence="2">
    <location>
        <position position="96"/>
    </location>
    <ligand>
        <name>Ca(2+)</name>
        <dbReference type="ChEBI" id="CHEBI:29108"/>
        <label>3</label>
    </ligand>
</feature>
<feature type="binding site" evidence="2">
    <location>
        <position position="98"/>
    </location>
    <ligand>
        <name>Ca(2+)</name>
        <dbReference type="ChEBI" id="CHEBI:29108"/>
        <label>3</label>
    </ligand>
</feature>
<feature type="binding site" evidence="2">
    <location>
        <position position="105"/>
    </location>
    <ligand>
        <name>Ca(2+)</name>
        <dbReference type="ChEBI" id="CHEBI:29108"/>
        <label>3</label>
    </ligand>
</feature>
<feature type="binding site" evidence="2">
    <location>
        <position position="130"/>
    </location>
    <ligand>
        <name>Ca(2+)</name>
        <dbReference type="ChEBI" id="CHEBI:29108"/>
        <label>4</label>
    </ligand>
</feature>
<feature type="binding site" evidence="2">
    <location>
        <position position="132"/>
    </location>
    <ligand>
        <name>Ca(2+)</name>
        <dbReference type="ChEBI" id="CHEBI:29108"/>
        <label>4</label>
    </ligand>
</feature>
<feature type="binding site" evidence="2">
    <location>
        <position position="134"/>
    </location>
    <ligand>
        <name>Ca(2+)</name>
        <dbReference type="ChEBI" id="CHEBI:29108"/>
        <label>4</label>
    </ligand>
</feature>
<feature type="binding site" evidence="2">
    <location>
        <position position="136"/>
    </location>
    <ligand>
        <name>Ca(2+)</name>
        <dbReference type="ChEBI" id="CHEBI:29108"/>
        <label>4</label>
    </ligand>
</feature>
<feature type="binding site" evidence="2">
    <location>
        <position position="141"/>
    </location>
    <ligand>
        <name>Ca(2+)</name>
        <dbReference type="ChEBI" id="CHEBI:29108"/>
        <label>4</label>
    </ligand>
</feature>
<feature type="modified residue" description="N6,N6,N6-trimethyllysine" evidence="1">
    <location>
        <position position="116"/>
    </location>
</feature>
<name>CALM_PHYPO</name>
<dbReference type="EMBL" id="AB022702">
    <property type="protein sequence ID" value="BAA74459.1"/>
    <property type="molecule type" value="mRNA"/>
</dbReference>
<dbReference type="SMR" id="O96102"/>
<dbReference type="GO" id="GO:0016460">
    <property type="term" value="C:myosin II complex"/>
    <property type="evidence" value="ECO:0007669"/>
    <property type="project" value="TreeGrafter"/>
</dbReference>
<dbReference type="GO" id="GO:0005509">
    <property type="term" value="F:calcium ion binding"/>
    <property type="evidence" value="ECO:0007669"/>
    <property type="project" value="InterPro"/>
</dbReference>
<dbReference type="CDD" id="cd00051">
    <property type="entry name" value="EFh"/>
    <property type="match status" value="2"/>
</dbReference>
<dbReference type="FunFam" id="1.10.238.10:FF:000034">
    <property type="entry name" value="Calmodulin"/>
    <property type="match status" value="1"/>
</dbReference>
<dbReference type="FunFam" id="1.10.238.10:FF:000006">
    <property type="entry name" value="Calmodulin 1"/>
    <property type="match status" value="1"/>
</dbReference>
<dbReference type="Gene3D" id="1.10.238.10">
    <property type="entry name" value="EF-hand"/>
    <property type="match status" value="3"/>
</dbReference>
<dbReference type="InterPro" id="IPR050230">
    <property type="entry name" value="CALM/Myosin/TropC-like"/>
</dbReference>
<dbReference type="InterPro" id="IPR011992">
    <property type="entry name" value="EF-hand-dom_pair"/>
</dbReference>
<dbReference type="InterPro" id="IPR018247">
    <property type="entry name" value="EF_Hand_1_Ca_BS"/>
</dbReference>
<dbReference type="InterPro" id="IPR002048">
    <property type="entry name" value="EF_hand_dom"/>
</dbReference>
<dbReference type="PANTHER" id="PTHR23048:SF0">
    <property type="entry name" value="CALMODULIN LIKE 3"/>
    <property type="match status" value="1"/>
</dbReference>
<dbReference type="PANTHER" id="PTHR23048">
    <property type="entry name" value="MYOSIN LIGHT CHAIN 1, 3"/>
    <property type="match status" value="1"/>
</dbReference>
<dbReference type="Pfam" id="PF13499">
    <property type="entry name" value="EF-hand_7"/>
    <property type="match status" value="2"/>
</dbReference>
<dbReference type="SMART" id="SM00054">
    <property type="entry name" value="EFh"/>
    <property type="match status" value="4"/>
</dbReference>
<dbReference type="SUPFAM" id="SSF47473">
    <property type="entry name" value="EF-hand"/>
    <property type="match status" value="1"/>
</dbReference>
<dbReference type="PROSITE" id="PS00018">
    <property type="entry name" value="EF_HAND_1"/>
    <property type="match status" value="4"/>
</dbReference>
<dbReference type="PROSITE" id="PS50222">
    <property type="entry name" value="EF_HAND_2"/>
    <property type="match status" value="4"/>
</dbReference>
<reference key="1">
    <citation type="submission" date="1999-01" db="EMBL/GenBank/DDBJ databases">
        <title>Molecular cloning of calmodulin from lower Eukaryote, Physarum polycephalum.</title>
        <authorList>
            <person name="Nakamura A."/>
            <person name="Toda H."/>
            <person name="Kohama K."/>
        </authorList>
    </citation>
    <scope>NUCLEOTIDE SEQUENCE [MRNA]</scope>
    <source>
        <strain>Ng-1</strain>
    </source>
</reference>
<organism>
    <name type="scientific">Physarum polycephalum</name>
    <name type="common">Slime mold</name>
    <dbReference type="NCBI Taxonomy" id="5791"/>
    <lineage>
        <taxon>Eukaryota</taxon>
        <taxon>Amoebozoa</taxon>
        <taxon>Evosea</taxon>
        <taxon>Eumycetozoa</taxon>
        <taxon>Myxogastria</taxon>
        <taxon>Myxogastromycetidae</taxon>
        <taxon>Physariida</taxon>
        <taxon>Physaraceae</taxon>
        <taxon>Physarum</taxon>
    </lineage>
</organism>
<keyword id="KW-0106">Calcium</keyword>
<keyword id="KW-0479">Metal-binding</keyword>
<keyword id="KW-0488">Methylation</keyword>
<keyword id="KW-0677">Repeat</keyword>
<comment type="function">
    <text>Calmodulin mediates the control of a large number of enzymes, ion channels and other proteins by Ca(2+). Among the enzymes to be stimulated by the calmodulin-Ca(2+) complex are a number of protein kinases and phosphatases.</text>
</comment>
<comment type="miscellaneous">
    <text evidence="1">This protein has four functional calcium-binding sites.</text>
</comment>
<comment type="similarity">
    <text evidence="3">Belongs to the calmodulin family.</text>
</comment>
<accession>O96102</accession>
<protein>
    <recommendedName>
        <fullName>Calmodulin</fullName>
        <shortName>CaM</shortName>
    </recommendedName>
</protein>
<sequence length="149" mass="16737">MVDSLTEEQIAEFKEAFSLFDKDGDGNITTKELGTVMRSLGQNPTEAELQDMINEVDADGNGTIDFPEFLTMMARKMADTDTEEEIREAFKVFDKDGNGFISAAELRHVMTNLGEKLSDEEVDEMIREADVDGDGQVNYDEFVKMMLSK</sequence>
<proteinExistence type="evidence at transcript level"/>
<evidence type="ECO:0000250" key="1"/>
<evidence type="ECO:0000255" key="2">
    <source>
        <dbReference type="PROSITE-ProRule" id="PRU00448"/>
    </source>
</evidence>
<evidence type="ECO:0000305" key="3"/>